<accession>P55896</accession>
<evidence type="ECO:0000269" key="1">
    <source>
    </source>
</evidence>
<evidence type="ECO:0000269" key="2">
    <source>
    </source>
</evidence>
<evidence type="ECO:0000269" key="3">
    <source>
    </source>
</evidence>
<evidence type="ECO:0000269" key="4">
    <source>
    </source>
</evidence>
<evidence type="ECO:0000269" key="5">
    <source ref="1"/>
</evidence>
<evidence type="ECO:0000303" key="6">
    <source>
    </source>
</evidence>
<evidence type="ECO:0000303" key="7">
    <source>
    </source>
</evidence>
<evidence type="ECO:0000303" key="8">
    <source>
    </source>
</evidence>
<evidence type="ECO:0000303" key="9">
    <source ref="1"/>
</evidence>
<evidence type="ECO:0000305" key="10"/>
<evidence type="ECO:0000305" key="11">
    <source ref="1"/>
</evidence>
<evidence type="ECO:0000312" key="12">
    <source>
        <dbReference type="PDB" id="1SCO"/>
    </source>
</evidence>
<evidence type="ECO:0000312" key="13">
    <source>
        <dbReference type="PDB" id="2CK4"/>
    </source>
</evidence>
<evidence type="ECO:0000312" key="14">
    <source>
        <dbReference type="PDB" id="2CK5"/>
    </source>
</evidence>
<evidence type="ECO:0007829" key="15">
    <source>
        <dbReference type="PDB" id="1SCO"/>
    </source>
</evidence>
<name>KAX37_ORTSC</name>
<dbReference type="PDB" id="1SCO">
    <property type="method" value="NMR"/>
    <property type="chains" value="A=1-38"/>
</dbReference>
<dbReference type="PDB" id="2CK4">
    <property type="method" value="NMR"/>
    <property type="chains" value="A=1-38"/>
</dbReference>
<dbReference type="PDB" id="2CK5">
    <property type="method" value="NMR"/>
    <property type="chains" value="A=8-38"/>
</dbReference>
<dbReference type="PDBsum" id="1SCO"/>
<dbReference type="PDBsum" id="2CK4"/>
<dbReference type="PDBsum" id="2CK5"/>
<dbReference type="SMR" id="P55896"/>
<dbReference type="EvolutionaryTrace" id="P55896"/>
<dbReference type="GO" id="GO:0005576">
    <property type="term" value="C:extracellular region"/>
    <property type="evidence" value="ECO:0007669"/>
    <property type="project" value="UniProtKB-SubCell"/>
</dbReference>
<dbReference type="GO" id="GO:0008200">
    <property type="term" value="F:ion channel inhibitor activity"/>
    <property type="evidence" value="ECO:0007669"/>
    <property type="project" value="InterPro"/>
</dbReference>
<dbReference type="GO" id="GO:0015459">
    <property type="term" value="F:potassium channel regulator activity"/>
    <property type="evidence" value="ECO:0007669"/>
    <property type="project" value="UniProtKB-KW"/>
</dbReference>
<dbReference type="GO" id="GO:0090729">
    <property type="term" value="F:toxin activity"/>
    <property type="evidence" value="ECO:0007669"/>
    <property type="project" value="UniProtKB-KW"/>
</dbReference>
<dbReference type="FunFam" id="3.30.30.10:FF:000009">
    <property type="entry name" value="Potassium channel toxin alpha-KTx 4.3"/>
    <property type="match status" value="1"/>
</dbReference>
<dbReference type="Gene3D" id="3.30.30.10">
    <property type="entry name" value="Knottin, scorpion toxin-like"/>
    <property type="match status" value="1"/>
</dbReference>
<dbReference type="InterPro" id="IPR036574">
    <property type="entry name" value="Scorpion_toxin-like_sf"/>
</dbReference>
<dbReference type="InterPro" id="IPR001947">
    <property type="entry name" value="Scorpion_toxinS_K_inh"/>
</dbReference>
<dbReference type="Pfam" id="PF00451">
    <property type="entry name" value="Toxin_2"/>
    <property type="match status" value="1"/>
</dbReference>
<dbReference type="PRINTS" id="PR00286">
    <property type="entry name" value="CHARYBDTOXIN"/>
</dbReference>
<dbReference type="SUPFAM" id="SSF57095">
    <property type="entry name" value="Scorpion toxin-like"/>
    <property type="match status" value="1"/>
</dbReference>
<dbReference type="PROSITE" id="PS01138">
    <property type="entry name" value="SCORP_SHORT_TOXIN"/>
    <property type="match status" value="1"/>
</dbReference>
<reference key="1">
    <citation type="journal article" date="1996" name="Pure Appl. Chem.">
        <title>Structure and function of the potassium channel inhibitor from black scorpion venom.</title>
        <authorList>
            <person name="Grishin E.V."/>
            <person name="Korolkova Y.V."/>
            <person name="Kozlov S.A."/>
            <person name="Lipkin A.V."/>
            <person name="Nosyreva E.D."/>
            <person name="Pluzhnikov K.A."/>
            <person name="Sukhanov S.V."/>
            <person name="Volkova T.M."/>
        </authorList>
    </citation>
    <scope>PROTEIN SEQUENCE</scope>
    <scope>FUNCTION</scope>
    <scope>SUBCELLULAR LOCATION</scope>
    <source>
        <tissue>Venom</tissue>
    </source>
</reference>
<reference key="2">
    <citation type="journal article" date="2005" name="Biochem. J.">
        <title>K+ channel types targeted by synthetic OSK1, a toxin from Orthochirus scrobiculosus scorpion venom.</title>
        <authorList>
            <person name="Mouhat S."/>
            <person name="Visan V."/>
            <person name="Ananthakrishnan S."/>
            <person name="Wulff H."/>
            <person name="Andreotti N."/>
            <person name="Grissmer S."/>
            <person name="Darbon H."/>
            <person name="De Waard M."/>
            <person name="Sabatier J.-M."/>
        </authorList>
    </citation>
    <scope>MUTAGENESIS OF ARG-12; GLU-16; LYS-20 AND THR-36</scope>
    <scope>SYNTHESIS</scope>
    <scope>TOXIC DOSE</scope>
    <scope>FUNCTION</scope>
</reference>
<reference key="3">
    <citation type="journal article" date="2006" name="Mol. Pharmacol.">
        <title>Pharmacological profiling of Orthochirus scrobiculosus toxin 1 analogs with a trimmed N-terminal domain.</title>
        <authorList>
            <person name="Mouhat S."/>
            <person name="Teodorescu G."/>
            <person name="Homerick D."/>
            <person name="Visan V."/>
            <person name="Wulff H."/>
            <person name="Wu Y."/>
            <person name="Grissmer S."/>
            <person name="Darbon H."/>
            <person name="De Waard M."/>
            <person name="Sabatier J.-M."/>
        </authorList>
    </citation>
    <scope>MUTAGENESIS</scope>
    <scope>FUNCTION</scope>
</reference>
<reference key="4">
    <citation type="journal article" date="2019" name="FEBS Lett.">
        <title>Scorpion toxins interact with nicotinic acetylcholine receptors.</title>
        <authorList>
            <person name="Kasheverov I.E."/>
            <person name="Oparin P.B."/>
            <person name="Zhmak M.N."/>
            <person name="Egorova N.S."/>
            <person name="Ivanov I.A."/>
            <person name="Gigolaev A.M."/>
            <person name="Nekrasova O.V."/>
            <person name="Serebryakova M.V."/>
            <person name="Kudryavtsev D.S."/>
            <person name="Prokopev N.A."/>
            <person name="Hoang A.N."/>
            <person name="Tsetlin V.I."/>
            <person name="Vassilevski A.A."/>
            <person name="Utkin Y.N."/>
        </authorList>
    </citation>
    <scope>FUNCTION</scope>
    <scope>MASS SPECTROMETRY</scope>
    <source>
        <tissue>Venom</tissue>
    </source>
</reference>
<reference key="5">
    <citation type="journal article" date="1997" name="Biochemistry">
        <title>Three-dimensional structure of toxin OSK1 from Orthochirus scrobiculosus scorpion venom.</title>
        <authorList>
            <person name="Jaravine V.A."/>
            <person name="Nolde D.E."/>
            <person name="Reibarkh M.J."/>
            <person name="Korolkova Y.V."/>
            <person name="Kozlov S.A."/>
            <person name="Pluzhnikov K.A."/>
            <person name="Grishin E.V."/>
            <person name="Arseniev A.S."/>
        </authorList>
    </citation>
    <scope>STRUCTURE BY NMR</scope>
    <scope>DISULFIDE BONDS</scope>
</reference>
<protein>
    <recommendedName>
        <fullName evidence="10">Potassium channel toxin alpha-KTx 3.7</fullName>
    </recommendedName>
    <alternativeName>
        <fullName evidence="9">OsK-1</fullName>
        <shortName evidence="6 7 8">OsK1</shortName>
    </alternativeName>
</protein>
<feature type="peptide" id="PRO_0000044909" description="Potassium channel toxin alpha-KTx 3.7" evidence="5">
    <location>
        <begin position="1"/>
        <end position="38"/>
    </location>
</feature>
<feature type="disulfide bond" evidence="4 12 13 14">
    <location>
        <begin position="8"/>
        <end position="28"/>
    </location>
</feature>
<feature type="disulfide bond" evidence="4 12 13 14">
    <location>
        <begin position="14"/>
        <end position="33"/>
    </location>
</feature>
<feature type="disulfide bond" evidence="4 12 13 14">
    <location>
        <begin position="18"/>
        <end position="35"/>
    </location>
</feature>
<feature type="mutagenesis site" description="Loss of activity; when associated with K-16 and D-20." evidence="1">
    <original>R</original>
    <variation>P</variation>
    <location>
        <position position="12"/>
    </location>
</feature>
<feature type="mutagenesis site" description="No change in activity. 1 to 2-fold increase in activity on Kv1.1/KCNA1, Kv1.2/KCNA2 and Kv1.3/KCNA3 without affecting activity on KCa3.1/KCNMA1; when associated with K-20. Loss of activity; when associated with R-12 and D-20. Loss of activity; when associated with D-20 and T-36." evidence="1">
    <original>E</original>
    <variation>K</variation>
    <location>
        <position position="16"/>
    </location>
</feature>
<feature type="mutagenesis site" description="3-fold reduction of activity. 1 to 2-fold increase in activity on Kv1.1/KCNA1, Kv1.2/KCNA2 and Kv1.3/KCNA3 without affecting activity on KCa3.1/KCNMA1; when associated with E-16. Loss of activity; when associated with R-12 and K-16. Loss of activity; when associated with K-16 and T-36." evidence="1">
    <original>K</original>
    <variation>D</variation>
    <location>
        <position position="20"/>
    </location>
</feature>
<feature type="mutagenesis site" description="Loss of activity; when associated with K-16 and D-20." evidence="1">
    <original>T</original>
    <variation>Y</variation>
    <location>
        <position position="36"/>
    </location>
</feature>
<feature type="strand" evidence="15">
    <location>
        <begin position="2"/>
        <end position="4"/>
    </location>
</feature>
<feature type="helix" evidence="15">
    <location>
        <begin position="11"/>
        <end position="21"/>
    </location>
</feature>
<feature type="strand" evidence="15">
    <location>
        <begin position="23"/>
        <end position="29"/>
    </location>
</feature>
<feature type="strand" evidence="15">
    <location>
        <begin position="32"/>
        <end position="37"/>
    </location>
</feature>
<keyword id="KW-0002">3D-structure</keyword>
<keyword id="KW-1221">Calcium-activated potassium channel impairing toxin</keyword>
<keyword id="KW-0903">Direct protein sequencing</keyword>
<keyword id="KW-1015">Disulfide bond</keyword>
<keyword id="KW-0872">Ion channel impairing toxin</keyword>
<keyword id="KW-0528">Neurotoxin</keyword>
<keyword id="KW-0632">Potassium channel impairing toxin</keyword>
<keyword id="KW-0964">Secreted</keyword>
<keyword id="KW-0800">Toxin</keyword>
<keyword id="KW-1220">Voltage-gated potassium channel impairing toxin</keyword>
<sequence>GVIINVKCKISRQCLEPCKKAGMRFGKCMNGKCHCTPK</sequence>
<organism>
    <name type="scientific">Orthochirus scrobiculosus</name>
    <name type="common">Central Asian scorpion</name>
    <dbReference type="NCBI Taxonomy" id="6892"/>
    <lineage>
        <taxon>Eukaryota</taxon>
        <taxon>Metazoa</taxon>
        <taxon>Ecdysozoa</taxon>
        <taxon>Arthropoda</taxon>
        <taxon>Chelicerata</taxon>
        <taxon>Arachnida</taxon>
        <taxon>Scorpiones</taxon>
        <taxon>Buthida</taxon>
        <taxon>Buthoidea</taxon>
        <taxon>Buthidae</taxon>
        <taxon>Orthochirus</taxon>
    </lineage>
</organism>
<comment type="function">
    <text evidence="1 2 3 5">Blocks voltage-gated potassium channels Kv1.1/KCNA1 (IC(50)=0.6 nM), Kv1.2/KCNA2 (IC(50)=5.4 nM), Kv1.3/KCNA3 (IC(50)=0.014 nM) potently, and moderately block intermediate conductance calcium-activated potassium channels KCa3.1/KCNN4 (IC(50)=225 nM) (PubMed:15588251, PubMed:16234482, Ref.1). Also shows activity on muscle-type nicotinic acetylcholine receptor (nAChR), since it reversibly and dose-dependently inhibits acetylcholine-induced current through mouse muscle-type nAChR heterologously expressed in Xenopus oocytes (IC(50)=1.6 uM) (PubMed:31276191).</text>
</comment>
<comment type="subcellular location">
    <subcellularLocation>
        <location evidence="5">Secreted</location>
    </subcellularLocation>
</comment>
<comment type="tissue specificity">
    <text evidence="11">Expressed by the venom gland.</text>
</comment>
<comment type="domain">
    <text evidence="4">Has the structural arrangement of an alpha-helix connected to a beta-sheet by disulfide bonds (CSalpha/beta).</text>
</comment>
<comment type="mass spectrometry"/>
<comment type="toxic dose">
    <text evidence="1">LD(50) is 2 ug/kg by intracerebroventricular injection into mice.</text>
</comment>
<comment type="miscellaneous">
    <text evidence="1 2 3 5">Negative results: does not show activity on Kv1.4/KCNA4, Kv1.5/KCNA5, Kv1.6/KCNA6, Kv1.7/KCNA7, Kv3.1/KCNC1, Kv11.x/KCNH, KCa1.1/KCNMA1, KCa2.1/KCNN1, KCa2.2/KCNN2, and KCa2.3/KCNN3 (PubMed:15588251). Does not show activity on Kv3.2/KCNC2 (PubMed:16234482). May not inhibit neuronal human alpha-7 nAChR, since it does not inhibit alpha-7 alpha-bungarotoxin binding (IC(50)~20 uM) (PubMed:31276191).</text>
</comment>
<comment type="similarity">
    <text evidence="10">Belongs to the short scorpion toxin superfamily. Potassium channel inhibitor family. Alpha-KTx 03 subfamily.</text>
</comment>
<proteinExistence type="evidence at protein level"/>